<proteinExistence type="inferred from homology"/>
<reference key="1">
    <citation type="journal article" date="2004" name="Nucleic Acids Res.">
        <title>The genome sequence of Bacillus cereus ATCC 10987 reveals metabolic adaptations and a large plasmid related to Bacillus anthracis pXO1.</title>
        <authorList>
            <person name="Rasko D.A."/>
            <person name="Ravel J."/>
            <person name="Oekstad O.A."/>
            <person name="Helgason E."/>
            <person name="Cer R.Z."/>
            <person name="Jiang L."/>
            <person name="Shores K.A."/>
            <person name="Fouts D.E."/>
            <person name="Tourasse N.J."/>
            <person name="Angiuoli S.V."/>
            <person name="Kolonay J.F."/>
            <person name="Nelson W.C."/>
            <person name="Kolstoe A.-B."/>
            <person name="Fraser C.M."/>
            <person name="Read T.D."/>
        </authorList>
    </citation>
    <scope>NUCLEOTIDE SEQUENCE [LARGE SCALE GENOMIC DNA]</scope>
    <source>
        <strain>ATCC 10987 / NRS 248</strain>
    </source>
</reference>
<gene>
    <name type="primary">clpB</name>
    <name type="ordered locus">BCE_1287</name>
</gene>
<evidence type="ECO:0000250" key="1"/>
<evidence type="ECO:0000255" key="2">
    <source>
        <dbReference type="PROSITE-ProRule" id="PRU01251"/>
    </source>
</evidence>
<evidence type="ECO:0000305" key="3"/>
<dbReference type="EMBL" id="AE017194">
    <property type="protein sequence ID" value="AAS40216.1"/>
    <property type="molecule type" value="Genomic_DNA"/>
</dbReference>
<dbReference type="SMR" id="Q73BY1"/>
<dbReference type="KEGG" id="bca:BCE_1287"/>
<dbReference type="HOGENOM" id="CLU_005070_4_0_9"/>
<dbReference type="Proteomes" id="UP000002527">
    <property type="component" value="Chromosome"/>
</dbReference>
<dbReference type="GO" id="GO:0005737">
    <property type="term" value="C:cytoplasm"/>
    <property type="evidence" value="ECO:0007669"/>
    <property type="project" value="UniProtKB-SubCell"/>
</dbReference>
<dbReference type="GO" id="GO:0005524">
    <property type="term" value="F:ATP binding"/>
    <property type="evidence" value="ECO:0007669"/>
    <property type="project" value="UniProtKB-KW"/>
</dbReference>
<dbReference type="GO" id="GO:0016887">
    <property type="term" value="F:ATP hydrolysis activity"/>
    <property type="evidence" value="ECO:0007669"/>
    <property type="project" value="InterPro"/>
</dbReference>
<dbReference type="GO" id="GO:0034605">
    <property type="term" value="P:cellular response to heat"/>
    <property type="evidence" value="ECO:0007669"/>
    <property type="project" value="TreeGrafter"/>
</dbReference>
<dbReference type="GO" id="GO:0042026">
    <property type="term" value="P:protein refolding"/>
    <property type="evidence" value="ECO:0007669"/>
    <property type="project" value="InterPro"/>
</dbReference>
<dbReference type="CDD" id="cd00009">
    <property type="entry name" value="AAA"/>
    <property type="match status" value="1"/>
</dbReference>
<dbReference type="CDD" id="cd19499">
    <property type="entry name" value="RecA-like_ClpB_Hsp104-like"/>
    <property type="match status" value="1"/>
</dbReference>
<dbReference type="FunFam" id="1.10.8.60:FF:000017">
    <property type="entry name" value="ATP-dependent chaperone ClpB"/>
    <property type="match status" value="1"/>
</dbReference>
<dbReference type="FunFam" id="3.40.50.300:FF:000120">
    <property type="entry name" value="ATP-dependent chaperone ClpB"/>
    <property type="match status" value="1"/>
</dbReference>
<dbReference type="FunFam" id="3.40.50.300:FF:000025">
    <property type="entry name" value="ATP-dependent Clp protease subunit"/>
    <property type="match status" value="1"/>
</dbReference>
<dbReference type="FunFam" id="3.40.50.300:FF:000010">
    <property type="entry name" value="Chaperone clpB 1, putative"/>
    <property type="match status" value="1"/>
</dbReference>
<dbReference type="Gene3D" id="1.10.8.60">
    <property type="match status" value="1"/>
</dbReference>
<dbReference type="Gene3D" id="1.10.1780.10">
    <property type="entry name" value="Clp, N-terminal domain"/>
    <property type="match status" value="1"/>
</dbReference>
<dbReference type="Gene3D" id="3.40.50.300">
    <property type="entry name" value="P-loop containing nucleotide triphosphate hydrolases"/>
    <property type="match status" value="3"/>
</dbReference>
<dbReference type="InterPro" id="IPR003593">
    <property type="entry name" value="AAA+_ATPase"/>
</dbReference>
<dbReference type="InterPro" id="IPR003959">
    <property type="entry name" value="ATPase_AAA_core"/>
</dbReference>
<dbReference type="InterPro" id="IPR017730">
    <property type="entry name" value="Chaperonin_ClpB"/>
</dbReference>
<dbReference type="InterPro" id="IPR019489">
    <property type="entry name" value="Clp_ATPase_C"/>
</dbReference>
<dbReference type="InterPro" id="IPR036628">
    <property type="entry name" value="Clp_N_dom_sf"/>
</dbReference>
<dbReference type="InterPro" id="IPR004176">
    <property type="entry name" value="Clp_R_dom"/>
</dbReference>
<dbReference type="InterPro" id="IPR001270">
    <property type="entry name" value="ClpA/B"/>
</dbReference>
<dbReference type="InterPro" id="IPR018368">
    <property type="entry name" value="ClpA/B_CS1"/>
</dbReference>
<dbReference type="InterPro" id="IPR028299">
    <property type="entry name" value="ClpA/B_CS2"/>
</dbReference>
<dbReference type="InterPro" id="IPR041546">
    <property type="entry name" value="ClpA/ClpB_AAA_lid"/>
</dbReference>
<dbReference type="InterPro" id="IPR050130">
    <property type="entry name" value="ClpA_ClpB"/>
</dbReference>
<dbReference type="InterPro" id="IPR027417">
    <property type="entry name" value="P-loop_NTPase"/>
</dbReference>
<dbReference type="NCBIfam" id="TIGR03346">
    <property type="entry name" value="chaperone_ClpB"/>
    <property type="match status" value="1"/>
</dbReference>
<dbReference type="PANTHER" id="PTHR11638">
    <property type="entry name" value="ATP-DEPENDENT CLP PROTEASE"/>
    <property type="match status" value="1"/>
</dbReference>
<dbReference type="PANTHER" id="PTHR11638:SF18">
    <property type="entry name" value="HEAT SHOCK PROTEIN 104"/>
    <property type="match status" value="1"/>
</dbReference>
<dbReference type="Pfam" id="PF00004">
    <property type="entry name" value="AAA"/>
    <property type="match status" value="1"/>
</dbReference>
<dbReference type="Pfam" id="PF07724">
    <property type="entry name" value="AAA_2"/>
    <property type="match status" value="1"/>
</dbReference>
<dbReference type="Pfam" id="PF17871">
    <property type="entry name" value="AAA_lid_9"/>
    <property type="match status" value="1"/>
</dbReference>
<dbReference type="Pfam" id="PF02861">
    <property type="entry name" value="Clp_N"/>
    <property type="match status" value="2"/>
</dbReference>
<dbReference type="Pfam" id="PF10431">
    <property type="entry name" value="ClpB_D2-small"/>
    <property type="match status" value="1"/>
</dbReference>
<dbReference type="PRINTS" id="PR00300">
    <property type="entry name" value="CLPPROTEASEA"/>
</dbReference>
<dbReference type="SMART" id="SM00382">
    <property type="entry name" value="AAA"/>
    <property type="match status" value="2"/>
</dbReference>
<dbReference type="SMART" id="SM01086">
    <property type="entry name" value="ClpB_D2-small"/>
    <property type="match status" value="1"/>
</dbReference>
<dbReference type="SUPFAM" id="SSF81923">
    <property type="entry name" value="Double Clp-N motif"/>
    <property type="match status" value="1"/>
</dbReference>
<dbReference type="SUPFAM" id="SSF52540">
    <property type="entry name" value="P-loop containing nucleoside triphosphate hydrolases"/>
    <property type="match status" value="2"/>
</dbReference>
<dbReference type="PROSITE" id="PS51903">
    <property type="entry name" value="CLP_R"/>
    <property type="match status" value="1"/>
</dbReference>
<dbReference type="PROSITE" id="PS00870">
    <property type="entry name" value="CLPAB_1"/>
    <property type="match status" value="1"/>
</dbReference>
<dbReference type="PROSITE" id="PS00871">
    <property type="entry name" value="CLPAB_2"/>
    <property type="match status" value="1"/>
</dbReference>
<feature type="chain" id="PRO_0000191089" description="Chaperone protein ClpB">
    <location>
        <begin position="1"/>
        <end position="866"/>
    </location>
</feature>
<feature type="domain" description="Clp R" evidence="2">
    <location>
        <begin position="3"/>
        <end position="149"/>
    </location>
</feature>
<feature type="region of interest" description="Repeat 1" evidence="2">
    <location>
        <begin position="6"/>
        <end position="71"/>
    </location>
</feature>
<feature type="region of interest" description="Repeat 2" evidence="2">
    <location>
        <begin position="86"/>
        <end position="149"/>
    </location>
</feature>
<feature type="region of interest" description="NBD1" evidence="1">
    <location>
        <begin position="162"/>
        <end position="343"/>
    </location>
</feature>
<feature type="region of interest" description="Linker" evidence="1">
    <location>
        <begin position="344"/>
        <end position="551"/>
    </location>
</feature>
<feature type="region of interest" description="NBD2" evidence="1">
    <location>
        <begin position="561"/>
        <end position="773"/>
    </location>
</feature>
<feature type="region of interest" description="C-terminal" evidence="1">
    <location>
        <begin position="774"/>
        <end position="866"/>
    </location>
</feature>
<feature type="coiled-coil region" evidence="1">
    <location>
        <begin position="394"/>
        <end position="528"/>
    </location>
</feature>
<feature type="binding site" evidence="1">
    <location>
        <begin position="209"/>
        <end position="216"/>
    </location>
    <ligand>
        <name>ATP</name>
        <dbReference type="ChEBI" id="CHEBI:30616"/>
        <label>1</label>
    </ligand>
</feature>
<feature type="binding site" evidence="1">
    <location>
        <begin position="611"/>
        <end position="618"/>
    </location>
    <ligand>
        <name>ATP</name>
        <dbReference type="ChEBI" id="CHEBI:30616"/>
        <label>2</label>
    </ligand>
</feature>
<organism>
    <name type="scientific">Bacillus cereus (strain ATCC 10987 / NRS 248)</name>
    <dbReference type="NCBI Taxonomy" id="222523"/>
    <lineage>
        <taxon>Bacteria</taxon>
        <taxon>Bacillati</taxon>
        <taxon>Bacillota</taxon>
        <taxon>Bacilli</taxon>
        <taxon>Bacillales</taxon>
        <taxon>Bacillaceae</taxon>
        <taxon>Bacillus</taxon>
        <taxon>Bacillus cereus group</taxon>
    </lineage>
</organism>
<sequence>MDLNQMTTKTQEAIMSAQSLAVSHHHQEVDTVHLLFTLLEEQDGLAVRIFQKMNVDIEALKQGAEGLIKKKPSVTGSGAEAGKLYITGALQQLLVRAGKEAEKLQDDYISVEHVLLAFTEEKGDINQLFTRFHITKDNLLQSLMTVRGNQRVTSQNPEATYEALEKYGRDLVAEVRAGKIDPVIGRDSEIRRVIRILSRKTKNNPVLIGEPGVGKTAIVEGLAQRIVKKDVPEGLKDRTIFALDMSALVAGAKFRGEFEERLQAVLNEIKKSEGRILLFIDELHTIVGAGKTEGAMDAGNMLKPMLARGELHCIGATTLDEYRKYIEKDPALERRFQQVLAEEPTVEDTISILRGLKERFEIYHGVNIHDRAIVAASVLSDRYISDRFLPDKAIDLVDEACATIRTEIDSMPTELDEVTRRIMQLEIEEAALGKEKDFGSQERLKTLQRELSDLKEVASGMRAKWEKEKEDIHKVRDLREHLERLRRELEEAEGNYDLNKAAELRHGKIPAIEKELKEAEEMGAHNKQENRLLREEVSEEEIADIVSRWTGIPVAKLVEGEREKLLRLEQILSERVIGQEEAVSLVSDAVLRARAGIKDPNRPIGSFIFLGPTGVGKTELAKTLAQSLFDSEEQMIRIDMSEYMEKHAVSRLIGAPPGYVGYEEGGQLTEAVRRKPYSVILLDEIEKAHPEVFNILLQMLDDGRITDSQGRTVDFKNTVIIMTSNIGSAHLLDGLEDDGSIKEESRELVMGQLRGHFRPEFLNRVDEIILFKPLTTNEIKGIVDKIVKELQGRLADRHITVELTDAAKEFVVEAGFDPMYGARPLKRYVQRQVETKLARELIASTITDNSHVVVDVENNELVVHVK</sequence>
<keyword id="KW-0067">ATP-binding</keyword>
<keyword id="KW-0143">Chaperone</keyword>
<keyword id="KW-0175">Coiled coil</keyword>
<keyword id="KW-0963">Cytoplasm</keyword>
<keyword id="KW-0547">Nucleotide-binding</keyword>
<keyword id="KW-0677">Repeat</keyword>
<keyword id="KW-0346">Stress response</keyword>
<comment type="function">
    <text evidence="1">Part of a stress-induced multi-chaperone system, it is involved in the recovery of the cell from heat-induced damage, in cooperation with DnaK, DnaJ and GrpE. Acts before DnaK, in the processing of protein aggregates. Protein binding stimulates the ATPase activity; ATP hydrolysis unfolds the denatured protein aggregates, which probably helps expose new hydrophobic binding sites on the surface of ClpB-bound aggregates, contributing to the solubilization and refolding of denatured protein aggregates by DnaK (By similarity).</text>
</comment>
<comment type="subunit">
    <text evidence="1">Homohexamer. The oligomerization is ATP-dependent (By similarity).</text>
</comment>
<comment type="subcellular location">
    <subcellularLocation>
        <location evidence="3">Cytoplasm</location>
    </subcellularLocation>
</comment>
<comment type="domain">
    <text evidence="1">The Clp repeat (R) domain probably functions as a substrate-discriminating domain, recruiting aggregated proteins to the ClpB hexamer and/or stabilizing bound proteins. The NBD2 domain is responsible for oligomerization, whereas the NBD1 domain stabilizes the hexamer probably in an ATP-dependent manner. The movement of the coiled-coil domain is essential for ClpB ability to rescue proteins from an aggregated state, probably by pulling apart large aggregated proteins, which are bound between the coiled-coils motifs of adjacent ClpB subunits in the functional hexamer (By similarity).</text>
</comment>
<comment type="similarity">
    <text evidence="3">Belongs to the ClpA/ClpB family.</text>
</comment>
<name>CLPB_BACC1</name>
<protein>
    <recommendedName>
        <fullName>Chaperone protein ClpB</fullName>
    </recommendedName>
</protein>
<accession>Q73BY1</accession>